<protein>
    <recommendedName>
        <fullName evidence="10">Cysteine synthase 2</fullName>
        <shortName>CS 2</shortName>
        <ecNumber>2.5.1.47</ecNumber>
    </recommendedName>
    <alternativeName>
        <fullName evidence="8">Cysteine synthase-like protein</fullName>
        <shortName>CSl</shortName>
    </alternativeName>
    <alternativeName>
        <fullName>O-acetylserine (thiol)-lyase 2</fullName>
        <shortName>OAS-TL 2</shortName>
    </alternativeName>
    <alternativeName>
        <fullName>O-acetylserine sulfhydrylase 2</fullName>
    </alternativeName>
</protein>
<organism>
    <name type="scientific">Schizosaccharomyces pombe (strain 972 / ATCC 24843)</name>
    <name type="common">Fission yeast</name>
    <dbReference type="NCBI Taxonomy" id="284812"/>
    <lineage>
        <taxon>Eukaryota</taxon>
        <taxon>Fungi</taxon>
        <taxon>Dikarya</taxon>
        <taxon>Ascomycota</taxon>
        <taxon>Taphrinomycotina</taxon>
        <taxon>Schizosaccharomycetes</taxon>
        <taxon>Schizosaccharomycetales</taxon>
        <taxon>Schizosaccharomycetaceae</taxon>
        <taxon>Schizosaccharomyces</taxon>
    </lineage>
</organism>
<sequence>MAKKYQDLASGIAMGAVFMYLLRRLYESLRVKSSADSLEEDIVNGVEGLIGNTKMVRIKSLSQATGCDILAKAEFLNPGNSPKDRVALQMIRTAEENGDLVPYQSNAVYEGTAGSTGISIAMLCCSLGYDSRIYMPSDQSKEKSDILELLGAHVQRVTPAPIVDPNHFVNTARRNAANHTVDESIPGKGYFANQFENPANWQAHFNSTGPEIWRQCAGKLDAFIAGSGTGGTIAGISRYLKSKDPSITVCLADPPGSGLYHKVLHGVMFDLAEREGTRRRHQVDTIVEGVGINRMTRNFSIAEPLIDMAYRVTDEQAVAMSRYLVTHDGLFVGSSSAVNCVAAVRLAKKLGPGHRIVTLLCDPGSRHFSKLYNEEFLRKKNIVPQVPSSLDFVEA</sequence>
<feature type="chain" id="PRO_0000167129" description="Cysteine synthase 2">
    <location>
        <begin position="1"/>
        <end position="395"/>
    </location>
</feature>
<feature type="transmembrane region" description="Helical" evidence="4">
    <location>
        <begin position="6"/>
        <end position="22"/>
    </location>
</feature>
<feature type="binding site" evidence="2">
    <location>
        <begin position="228"/>
        <end position="232"/>
    </location>
    <ligand>
        <name>pyridoxal 5'-phosphate</name>
        <dbReference type="ChEBI" id="CHEBI:597326"/>
    </ligand>
</feature>
<feature type="binding site" evidence="2">
    <location>
        <position position="335"/>
    </location>
    <ligand>
        <name>pyridoxal 5'-phosphate</name>
        <dbReference type="ChEBI" id="CHEBI:597326"/>
    </ligand>
</feature>
<feature type="modified residue" description="N6-(pyridoxal phosphate)lysine" evidence="2">
    <location>
        <position position="83"/>
    </location>
</feature>
<gene>
    <name type="primary">cys12</name>
    <name evidence="7" type="synonym">cys1b</name>
    <name evidence="12" type="ORF">SPAC3A12.17c</name>
</gene>
<keyword id="KW-0472">Membrane</keyword>
<keyword id="KW-0496">Mitochondrion</keyword>
<keyword id="KW-1000">Mitochondrion outer membrane</keyword>
<keyword id="KW-0663">Pyridoxal phosphate</keyword>
<keyword id="KW-1185">Reference proteome</keyword>
<keyword id="KW-0808">Transferase</keyword>
<keyword id="KW-0812">Transmembrane</keyword>
<keyword id="KW-1133">Transmembrane helix</keyword>
<name>CYSKL_SCHPO</name>
<proteinExistence type="inferred from homology"/>
<comment type="function">
    <text evidence="5 11">Putative cysteine synthase that catalyzes the conversion of O-acetyl-L-serine (OAS) into cysteine, the last step in the cysteine biosynthesis pathway. However, in contrast to cysteine synthase cys11, this CS-like protein seems not to function in cysteine biosynthesis, at least under normal growth conditions, although the transcript is produced.</text>
</comment>
<comment type="catalytic activity">
    <reaction evidence="1">
        <text>O-acetyl-L-serine + hydrogen sulfide = L-cysteine + acetate</text>
        <dbReference type="Rhea" id="RHEA:14829"/>
        <dbReference type="ChEBI" id="CHEBI:29919"/>
        <dbReference type="ChEBI" id="CHEBI:30089"/>
        <dbReference type="ChEBI" id="CHEBI:35235"/>
        <dbReference type="ChEBI" id="CHEBI:58340"/>
        <dbReference type="EC" id="2.5.1.47"/>
    </reaction>
</comment>
<comment type="cofactor">
    <cofactor evidence="1">
        <name>pyridoxal 5'-phosphate</name>
        <dbReference type="ChEBI" id="CHEBI:597326"/>
    </cofactor>
</comment>
<comment type="subcellular location">
    <subcellularLocation>
        <location evidence="6">Mitochondrion</location>
    </subcellularLocation>
    <subcellularLocation>
        <location evidence="3">Mitochondrion outer membrane</location>
        <topology evidence="4">Single-pass membrane protein</topology>
    </subcellularLocation>
</comment>
<comment type="similarity">
    <text evidence="9">Belongs to the cysteine synthase/cystathionine beta-synthase family.</text>
</comment>
<reference key="1">
    <citation type="journal article" date="2002" name="Nature">
        <title>The genome sequence of Schizosaccharomyces pombe.</title>
        <authorList>
            <person name="Wood V."/>
            <person name="Gwilliam R."/>
            <person name="Rajandream M.A."/>
            <person name="Lyne M.H."/>
            <person name="Lyne R."/>
            <person name="Stewart A."/>
            <person name="Sgouros J.G."/>
            <person name="Peat N."/>
            <person name="Hayles J."/>
            <person name="Baker S.G."/>
            <person name="Basham D."/>
            <person name="Bowman S."/>
            <person name="Brooks K."/>
            <person name="Brown D."/>
            <person name="Brown S."/>
            <person name="Chillingworth T."/>
            <person name="Churcher C.M."/>
            <person name="Collins M."/>
            <person name="Connor R."/>
            <person name="Cronin A."/>
            <person name="Davis P."/>
            <person name="Feltwell T."/>
            <person name="Fraser A."/>
            <person name="Gentles S."/>
            <person name="Goble A."/>
            <person name="Hamlin N."/>
            <person name="Harris D.E."/>
            <person name="Hidalgo J."/>
            <person name="Hodgson G."/>
            <person name="Holroyd S."/>
            <person name="Hornsby T."/>
            <person name="Howarth S."/>
            <person name="Huckle E.J."/>
            <person name="Hunt S."/>
            <person name="Jagels K."/>
            <person name="James K.D."/>
            <person name="Jones L."/>
            <person name="Jones M."/>
            <person name="Leather S."/>
            <person name="McDonald S."/>
            <person name="McLean J."/>
            <person name="Mooney P."/>
            <person name="Moule S."/>
            <person name="Mungall K.L."/>
            <person name="Murphy L.D."/>
            <person name="Niblett D."/>
            <person name="Odell C."/>
            <person name="Oliver K."/>
            <person name="O'Neil S."/>
            <person name="Pearson D."/>
            <person name="Quail M.A."/>
            <person name="Rabbinowitsch E."/>
            <person name="Rutherford K.M."/>
            <person name="Rutter S."/>
            <person name="Saunders D."/>
            <person name="Seeger K."/>
            <person name="Sharp S."/>
            <person name="Skelton J."/>
            <person name="Simmonds M.N."/>
            <person name="Squares R."/>
            <person name="Squares S."/>
            <person name="Stevens K."/>
            <person name="Taylor K."/>
            <person name="Taylor R.G."/>
            <person name="Tivey A."/>
            <person name="Walsh S.V."/>
            <person name="Warren T."/>
            <person name="Whitehead S."/>
            <person name="Woodward J.R."/>
            <person name="Volckaert G."/>
            <person name="Aert R."/>
            <person name="Robben J."/>
            <person name="Grymonprez B."/>
            <person name="Weltjens I."/>
            <person name="Vanstreels E."/>
            <person name="Rieger M."/>
            <person name="Schaefer M."/>
            <person name="Mueller-Auer S."/>
            <person name="Gabel C."/>
            <person name="Fuchs M."/>
            <person name="Duesterhoeft A."/>
            <person name="Fritzc C."/>
            <person name="Holzer E."/>
            <person name="Moestl D."/>
            <person name="Hilbert H."/>
            <person name="Borzym K."/>
            <person name="Langer I."/>
            <person name="Beck A."/>
            <person name="Lehrach H."/>
            <person name="Reinhardt R."/>
            <person name="Pohl T.M."/>
            <person name="Eger P."/>
            <person name="Zimmermann W."/>
            <person name="Wedler H."/>
            <person name="Wambutt R."/>
            <person name="Purnelle B."/>
            <person name="Goffeau A."/>
            <person name="Cadieu E."/>
            <person name="Dreano S."/>
            <person name="Gloux S."/>
            <person name="Lelaure V."/>
            <person name="Mottier S."/>
            <person name="Galibert F."/>
            <person name="Aves S.J."/>
            <person name="Xiang Z."/>
            <person name="Hunt C."/>
            <person name="Moore K."/>
            <person name="Hurst S.M."/>
            <person name="Lucas M."/>
            <person name="Rochet M."/>
            <person name="Gaillardin C."/>
            <person name="Tallada V.A."/>
            <person name="Garzon A."/>
            <person name="Thode G."/>
            <person name="Daga R.R."/>
            <person name="Cruzado L."/>
            <person name="Jimenez J."/>
            <person name="Sanchez M."/>
            <person name="del Rey F."/>
            <person name="Benito J."/>
            <person name="Dominguez A."/>
            <person name="Revuelta J.L."/>
            <person name="Moreno S."/>
            <person name="Armstrong J."/>
            <person name="Forsburg S.L."/>
            <person name="Cerutti L."/>
            <person name="Lowe T."/>
            <person name="McCombie W.R."/>
            <person name="Paulsen I."/>
            <person name="Potashkin J."/>
            <person name="Shpakovski G.V."/>
            <person name="Ussery D."/>
            <person name="Barrell B.G."/>
            <person name="Nurse P."/>
        </authorList>
    </citation>
    <scope>NUCLEOTIDE SEQUENCE [LARGE SCALE GENOMIC DNA]</scope>
    <source>
        <strain>972 / ATCC 24843</strain>
    </source>
</reference>
<reference key="2">
    <citation type="journal article" date="2004" name="Biosci. Biotechnol. Biochem.">
        <title>Characterization of two genes encoding putative cysteine synthase required for cysteine biosynthesis in Schizosaccharomyces pombe.</title>
        <authorList>
            <person name="Fujita Y."/>
            <person name="Takegawa K."/>
        </authorList>
    </citation>
    <scope>FUNCTION</scope>
    <source>
        <strain>ATCC 38399</strain>
    </source>
</reference>
<reference key="3">
    <citation type="journal article" date="2006" name="Nat. Biotechnol.">
        <title>ORFeome cloning and global analysis of protein localization in the fission yeast Schizosaccharomyces pombe.</title>
        <authorList>
            <person name="Matsuyama A."/>
            <person name="Arai R."/>
            <person name="Yashiroda Y."/>
            <person name="Shirai A."/>
            <person name="Kamata A."/>
            <person name="Sekido S."/>
            <person name="Kobayashi Y."/>
            <person name="Hashimoto A."/>
            <person name="Hamamoto M."/>
            <person name="Hiraoka Y."/>
            <person name="Horinouchi S."/>
            <person name="Yoshida M."/>
        </authorList>
    </citation>
    <scope>SUBCELLULAR LOCATION [LARGE SCALE ANALYSIS]</scope>
</reference>
<reference key="4">
    <citation type="journal article" date="2007" name="Res. Microbiol.">
        <title>Multiple fungal enzymes possess cysteine synthase activity in vitro.</title>
        <authorList>
            <person name="Brzywczy J."/>
            <person name="Natorff R."/>
            <person name="Sienko M."/>
            <person name="Paszewski A."/>
        </authorList>
    </citation>
    <scope>FUNCTION</scope>
</reference>
<evidence type="ECO:0000250" key="1">
    <source>
        <dbReference type="UniProtKB" id="P0ABK5"/>
    </source>
</evidence>
<evidence type="ECO:0000250" key="2">
    <source>
        <dbReference type="UniProtKB" id="P16703"/>
    </source>
</evidence>
<evidence type="ECO:0000250" key="3">
    <source>
        <dbReference type="UniProtKB" id="P53206"/>
    </source>
</evidence>
<evidence type="ECO:0000255" key="4"/>
<evidence type="ECO:0000269" key="5">
    <source>
    </source>
</evidence>
<evidence type="ECO:0000269" key="6">
    <source>
    </source>
</evidence>
<evidence type="ECO:0000303" key="7">
    <source>
    </source>
</evidence>
<evidence type="ECO:0000303" key="8">
    <source>
    </source>
</evidence>
<evidence type="ECO:0000305" key="9"/>
<evidence type="ECO:0000305" key="10">
    <source>
    </source>
</evidence>
<evidence type="ECO:0000305" key="11">
    <source>
    </source>
</evidence>
<evidence type="ECO:0000312" key="12">
    <source>
        <dbReference type="PomBase" id="SPAC3A12.17c"/>
    </source>
</evidence>
<accession>P87131</accession>
<dbReference type="EC" id="2.5.1.47"/>
<dbReference type="EMBL" id="CU329670">
    <property type="protein sequence ID" value="CAB08745.1"/>
    <property type="molecule type" value="Genomic_DNA"/>
</dbReference>
<dbReference type="PIR" id="T38685">
    <property type="entry name" value="T38685"/>
</dbReference>
<dbReference type="RefSeq" id="NP_593343.1">
    <property type="nucleotide sequence ID" value="NM_001018775.2"/>
</dbReference>
<dbReference type="SMR" id="P87131"/>
<dbReference type="BioGRID" id="279038">
    <property type="interactions" value="1"/>
</dbReference>
<dbReference type="FunCoup" id="P87131">
    <property type="interactions" value="353"/>
</dbReference>
<dbReference type="STRING" id="284812.P87131"/>
<dbReference type="iPTMnet" id="P87131"/>
<dbReference type="PaxDb" id="4896-SPAC3A12.17c.1"/>
<dbReference type="EnsemblFungi" id="SPAC3A12.17c.1">
    <property type="protein sequence ID" value="SPAC3A12.17c.1:pep"/>
    <property type="gene ID" value="SPAC3A12.17c"/>
</dbReference>
<dbReference type="GeneID" id="2542583"/>
<dbReference type="KEGG" id="spo:2542583"/>
<dbReference type="PomBase" id="SPAC3A12.17c">
    <property type="gene designation" value="cys12"/>
</dbReference>
<dbReference type="VEuPathDB" id="FungiDB:SPAC3A12.17c"/>
<dbReference type="eggNOG" id="KOG1481">
    <property type="taxonomic scope" value="Eukaryota"/>
</dbReference>
<dbReference type="HOGENOM" id="CLU_021018_1_0_1"/>
<dbReference type="InParanoid" id="P87131"/>
<dbReference type="OMA" id="WMADYGF"/>
<dbReference type="PhylomeDB" id="P87131"/>
<dbReference type="PRO" id="PR:P87131"/>
<dbReference type="Proteomes" id="UP000002485">
    <property type="component" value="Chromosome I"/>
</dbReference>
<dbReference type="GO" id="GO:0005737">
    <property type="term" value="C:cytoplasm"/>
    <property type="evidence" value="ECO:0000318"/>
    <property type="project" value="GO_Central"/>
</dbReference>
<dbReference type="GO" id="GO:0005741">
    <property type="term" value="C:mitochondrial outer membrane"/>
    <property type="evidence" value="ECO:0000266"/>
    <property type="project" value="PomBase"/>
</dbReference>
<dbReference type="GO" id="GO:0005739">
    <property type="term" value="C:mitochondrion"/>
    <property type="evidence" value="ECO:0007005"/>
    <property type="project" value="PomBase"/>
</dbReference>
<dbReference type="GO" id="GO:0004124">
    <property type="term" value="F:cysteine synthase activity"/>
    <property type="evidence" value="ECO:0000318"/>
    <property type="project" value="GO_Central"/>
</dbReference>
<dbReference type="GO" id="GO:0006535">
    <property type="term" value="P:cysteine biosynthetic process from serine"/>
    <property type="evidence" value="ECO:0000318"/>
    <property type="project" value="GO_Central"/>
</dbReference>
<dbReference type="CDD" id="cd01561">
    <property type="entry name" value="CBS_like"/>
    <property type="match status" value="1"/>
</dbReference>
<dbReference type="FunFam" id="3.40.50.1100:FF:000096">
    <property type="entry name" value="Related to cysteine synthase"/>
    <property type="match status" value="1"/>
</dbReference>
<dbReference type="Gene3D" id="3.40.50.1100">
    <property type="match status" value="2"/>
</dbReference>
<dbReference type="InterPro" id="IPR050214">
    <property type="entry name" value="Cys_Synth/Cystath_Beta-Synth"/>
</dbReference>
<dbReference type="InterPro" id="IPR001216">
    <property type="entry name" value="P-phosphate_BS"/>
</dbReference>
<dbReference type="InterPro" id="IPR001926">
    <property type="entry name" value="TrpB-like_PALP"/>
</dbReference>
<dbReference type="InterPro" id="IPR036052">
    <property type="entry name" value="TrpB-like_PALP_sf"/>
</dbReference>
<dbReference type="PANTHER" id="PTHR10314">
    <property type="entry name" value="CYSTATHIONINE BETA-SYNTHASE"/>
    <property type="match status" value="1"/>
</dbReference>
<dbReference type="Pfam" id="PF00291">
    <property type="entry name" value="PALP"/>
    <property type="match status" value="1"/>
</dbReference>
<dbReference type="SUPFAM" id="SSF53686">
    <property type="entry name" value="Tryptophan synthase beta subunit-like PLP-dependent enzymes"/>
    <property type="match status" value="1"/>
</dbReference>
<dbReference type="PROSITE" id="PS00901">
    <property type="entry name" value="CYS_SYNTHASE"/>
    <property type="match status" value="1"/>
</dbReference>